<gene>
    <name type="primary">DCAF6</name>
    <name type="synonym">IQWD1</name>
    <name type="ORF">MSTP055</name>
</gene>
<reference key="1">
    <citation type="journal article" date="2005" name="J. Biol. Chem.">
        <title>NRIP, a novel nuclear receptor interaction protein, enhances the transcriptional activity of nuclear receptors.</title>
        <authorList>
            <person name="Tsai T.C."/>
            <person name="Lee Y.L."/>
            <person name="Hsiao W.C."/>
            <person name="Tsao Y.P."/>
            <person name="Chen S.L."/>
        </authorList>
    </citation>
    <scope>NUCLEOTIDE SEQUENCE [MRNA] (ISOFORM 1)</scope>
    <scope>FUNCTION</scope>
    <scope>INTERACTION WITH NR3C1 AND AR</scope>
    <scope>SUBCELLULAR LOCATION</scope>
    <scope>TISSUE SPECIFICITY</scope>
</reference>
<reference key="2">
    <citation type="submission" date="2006-06" db="EMBL/GenBank/DDBJ databases">
        <title>ARCAP, a novel androgen receptor coactivator, modulates the proliferation of hepatoma cells.</title>
        <authorList>
            <person name="Chang T.-J."/>
            <person name="Lui W.-Y."/>
            <person name="Hsia C.-Y."/>
            <person name="Huang K.-T."/>
            <person name="Huang M.-H."/>
            <person name="Lai C."/>
            <person name="King K.-L."/>
            <person name="Chau G.-Y."/>
            <person name="Chi C.-W."/>
            <person name="Li A.F.-Y."/>
        </authorList>
    </citation>
    <scope>NUCLEOTIDE SEQUENCE [MRNA] (ISOFORM 1)</scope>
</reference>
<reference key="3">
    <citation type="submission" date="1998-12" db="EMBL/GenBank/DDBJ databases">
        <authorList>
            <person name="Zhao B."/>
            <person name="Xu Y.Y."/>
            <person name="Liu Y.Q."/>
            <person name="Wang X.Y."/>
            <person name="Liu B."/>
            <person name="Ye J."/>
            <person name="Song L."/>
            <person name="Zhao Y."/>
            <person name="Cao H.Q."/>
            <person name="Zhao X.W."/>
            <person name="Gao Y."/>
            <person name="Liu L.S."/>
            <person name="Ding J.F."/>
            <person name="Gao R.L."/>
            <person name="Wu Q.Y."/>
            <person name="Qiang B.Q."/>
            <person name="Yuan J.G."/>
            <person name="Liew C.C."/>
            <person name="Zhao M.S."/>
            <person name="Hui R.T."/>
        </authorList>
    </citation>
    <scope>NUCLEOTIDE SEQUENCE [LARGE SCALE MRNA] (ISOFORM 3)</scope>
    <source>
        <tissue>Heart</tissue>
    </source>
</reference>
<reference key="4">
    <citation type="journal article" date="2004" name="Nat. Genet.">
        <title>Complete sequencing and characterization of 21,243 full-length human cDNAs.</title>
        <authorList>
            <person name="Ota T."/>
            <person name="Suzuki Y."/>
            <person name="Nishikawa T."/>
            <person name="Otsuki T."/>
            <person name="Sugiyama T."/>
            <person name="Irie R."/>
            <person name="Wakamatsu A."/>
            <person name="Hayashi K."/>
            <person name="Sato H."/>
            <person name="Nagai K."/>
            <person name="Kimura K."/>
            <person name="Makita H."/>
            <person name="Sekine M."/>
            <person name="Obayashi M."/>
            <person name="Nishi T."/>
            <person name="Shibahara T."/>
            <person name="Tanaka T."/>
            <person name="Ishii S."/>
            <person name="Yamamoto J."/>
            <person name="Saito K."/>
            <person name="Kawai Y."/>
            <person name="Isono Y."/>
            <person name="Nakamura Y."/>
            <person name="Nagahari K."/>
            <person name="Murakami K."/>
            <person name="Yasuda T."/>
            <person name="Iwayanagi T."/>
            <person name="Wagatsuma M."/>
            <person name="Shiratori A."/>
            <person name="Sudo H."/>
            <person name="Hosoiri T."/>
            <person name="Kaku Y."/>
            <person name="Kodaira H."/>
            <person name="Kondo H."/>
            <person name="Sugawara M."/>
            <person name="Takahashi M."/>
            <person name="Kanda K."/>
            <person name="Yokoi T."/>
            <person name="Furuya T."/>
            <person name="Kikkawa E."/>
            <person name="Omura Y."/>
            <person name="Abe K."/>
            <person name="Kamihara K."/>
            <person name="Katsuta N."/>
            <person name="Sato K."/>
            <person name="Tanikawa M."/>
            <person name="Yamazaki M."/>
            <person name="Ninomiya K."/>
            <person name="Ishibashi T."/>
            <person name="Yamashita H."/>
            <person name="Murakawa K."/>
            <person name="Fujimori K."/>
            <person name="Tanai H."/>
            <person name="Kimata M."/>
            <person name="Watanabe M."/>
            <person name="Hiraoka S."/>
            <person name="Chiba Y."/>
            <person name="Ishida S."/>
            <person name="Ono Y."/>
            <person name="Takiguchi S."/>
            <person name="Watanabe S."/>
            <person name="Yosida M."/>
            <person name="Hotuta T."/>
            <person name="Kusano J."/>
            <person name="Kanehori K."/>
            <person name="Takahashi-Fujii A."/>
            <person name="Hara H."/>
            <person name="Tanase T.-O."/>
            <person name="Nomura Y."/>
            <person name="Togiya S."/>
            <person name="Komai F."/>
            <person name="Hara R."/>
            <person name="Takeuchi K."/>
            <person name="Arita M."/>
            <person name="Imose N."/>
            <person name="Musashino K."/>
            <person name="Yuuki H."/>
            <person name="Oshima A."/>
            <person name="Sasaki N."/>
            <person name="Aotsuka S."/>
            <person name="Yoshikawa Y."/>
            <person name="Matsunawa H."/>
            <person name="Ichihara T."/>
            <person name="Shiohata N."/>
            <person name="Sano S."/>
            <person name="Moriya S."/>
            <person name="Momiyama H."/>
            <person name="Satoh N."/>
            <person name="Takami S."/>
            <person name="Terashima Y."/>
            <person name="Suzuki O."/>
            <person name="Nakagawa S."/>
            <person name="Senoh A."/>
            <person name="Mizoguchi H."/>
            <person name="Goto Y."/>
            <person name="Shimizu F."/>
            <person name="Wakebe H."/>
            <person name="Hishigaki H."/>
            <person name="Watanabe T."/>
            <person name="Sugiyama A."/>
            <person name="Takemoto M."/>
            <person name="Kawakami B."/>
            <person name="Yamazaki M."/>
            <person name="Watanabe K."/>
            <person name="Kumagai A."/>
            <person name="Itakura S."/>
            <person name="Fukuzumi Y."/>
            <person name="Fujimori Y."/>
            <person name="Komiyama M."/>
            <person name="Tashiro H."/>
            <person name="Tanigami A."/>
            <person name="Fujiwara T."/>
            <person name="Ono T."/>
            <person name="Yamada K."/>
            <person name="Fujii Y."/>
            <person name="Ozaki K."/>
            <person name="Hirao M."/>
            <person name="Ohmori Y."/>
            <person name="Kawabata A."/>
            <person name="Hikiji T."/>
            <person name="Kobatake N."/>
            <person name="Inagaki H."/>
            <person name="Ikema Y."/>
            <person name="Okamoto S."/>
            <person name="Okitani R."/>
            <person name="Kawakami T."/>
            <person name="Noguchi S."/>
            <person name="Itoh T."/>
            <person name="Shigeta K."/>
            <person name="Senba T."/>
            <person name="Matsumura K."/>
            <person name="Nakajima Y."/>
            <person name="Mizuno T."/>
            <person name="Morinaga M."/>
            <person name="Sasaki M."/>
            <person name="Togashi T."/>
            <person name="Oyama M."/>
            <person name="Hata H."/>
            <person name="Watanabe M."/>
            <person name="Komatsu T."/>
            <person name="Mizushima-Sugano J."/>
            <person name="Satoh T."/>
            <person name="Shirai Y."/>
            <person name="Takahashi Y."/>
            <person name="Nakagawa K."/>
            <person name="Okumura K."/>
            <person name="Nagase T."/>
            <person name="Nomura N."/>
            <person name="Kikuchi H."/>
            <person name="Masuho Y."/>
            <person name="Yamashita R."/>
            <person name="Nakai K."/>
            <person name="Yada T."/>
            <person name="Nakamura Y."/>
            <person name="Ohara O."/>
            <person name="Isogai T."/>
            <person name="Sugano S."/>
        </authorList>
    </citation>
    <scope>NUCLEOTIDE SEQUENCE [LARGE SCALE MRNA] (ISOFORM 4)</scope>
    <source>
        <tissue>Heart</tissue>
    </source>
</reference>
<reference key="5">
    <citation type="journal article" date="2006" name="Nature">
        <title>The DNA sequence and biological annotation of human chromosome 1.</title>
        <authorList>
            <person name="Gregory S.G."/>
            <person name="Barlow K.F."/>
            <person name="McLay K.E."/>
            <person name="Kaul R."/>
            <person name="Swarbreck D."/>
            <person name="Dunham A."/>
            <person name="Scott C.E."/>
            <person name="Howe K.L."/>
            <person name="Woodfine K."/>
            <person name="Spencer C.C.A."/>
            <person name="Jones M.C."/>
            <person name="Gillson C."/>
            <person name="Searle S."/>
            <person name="Zhou Y."/>
            <person name="Kokocinski F."/>
            <person name="McDonald L."/>
            <person name="Evans R."/>
            <person name="Phillips K."/>
            <person name="Atkinson A."/>
            <person name="Cooper R."/>
            <person name="Jones C."/>
            <person name="Hall R.E."/>
            <person name="Andrews T.D."/>
            <person name="Lloyd C."/>
            <person name="Ainscough R."/>
            <person name="Almeida J.P."/>
            <person name="Ambrose K.D."/>
            <person name="Anderson F."/>
            <person name="Andrew R.W."/>
            <person name="Ashwell R.I.S."/>
            <person name="Aubin K."/>
            <person name="Babbage A.K."/>
            <person name="Bagguley C.L."/>
            <person name="Bailey J."/>
            <person name="Beasley H."/>
            <person name="Bethel G."/>
            <person name="Bird C.P."/>
            <person name="Bray-Allen S."/>
            <person name="Brown J.Y."/>
            <person name="Brown A.J."/>
            <person name="Buckley D."/>
            <person name="Burton J."/>
            <person name="Bye J."/>
            <person name="Carder C."/>
            <person name="Chapman J.C."/>
            <person name="Clark S.Y."/>
            <person name="Clarke G."/>
            <person name="Clee C."/>
            <person name="Cobley V."/>
            <person name="Collier R.E."/>
            <person name="Corby N."/>
            <person name="Coville G.J."/>
            <person name="Davies J."/>
            <person name="Deadman R."/>
            <person name="Dunn M."/>
            <person name="Earthrowl M."/>
            <person name="Ellington A.G."/>
            <person name="Errington H."/>
            <person name="Frankish A."/>
            <person name="Frankland J."/>
            <person name="French L."/>
            <person name="Garner P."/>
            <person name="Garnett J."/>
            <person name="Gay L."/>
            <person name="Ghori M.R.J."/>
            <person name="Gibson R."/>
            <person name="Gilby L.M."/>
            <person name="Gillett W."/>
            <person name="Glithero R.J."/>
            <person name="Grafham D.V."/>
            <person name="Griffiths C."/>
            <person name="Griffiths-Jones S."/>
            <person name="Grocock R."/>
            <person name="Hammond S."/>
            <person name="Harrison E.S.I."/>
            <person name="Hart E."/>
            <person name="Haugen E."/>
            <person name="Heath P.D."/>
            <person name="Holmes S."/>
            <person name="Holt K."/>
            <person name="Howden P.J."/>
            <person name="Hunt A.R."/>
            <person name="Hunt S.E."/>
            <person name="Hunter G."/>
            <person name="Isherwood J."/>
            <person name="James R."/>
            <person name="Johnson C."/>
            <person name="Johnson D."/>
            <person name="Joy A."/>
            <person name="Kay M."/>
            <person name="Kershaw J.K."/>
            <person name="Kibukawa M."/>
            <person name="Kimberley A.M."/>
            <person name="King A."/>
            <person name="Knights A.J."/>
            <person name="Lad H."/>
            <person name="Laird G."/>
            <person name="Lawlor S."/>
            <person name="Leongamornlert D.A."/>
            <person name="Lloyd D.M."/>
            <person name="Loveland J."/>
            <person name="Lovell J."/>
            <person name="Lush M.J."/>
            <person name="Lyne R."/>
            <person name="Martin S."/>
            <person name="Mashreghi-Mohammadi M."/>
            <person name="Matthews L."/>
            <person name="Matthews N.S.W."/>
            <person name="McLaren S."/>
            <person name="Milne S."/>
            <person name="Mistry S."/>
            <person name="Moore M.J.F."/>
            <person name="Nickerson T."/>
            <person name="O'Dell C.N."/>
            <person name="Oliver K."/>
            <person name="Palmeiri A."/>
            <person name="Palmer S.A."/>
            <person name="Parker A."/>
            <person name="Patel D."/>
            <person name="Pearce A.V."/>
            <person name="Peck A.I."/>
            <person name="Pelan S."/>
            <person name="Phelps K."/>
            <person name="Phillimore B.J."/>
            <person name="Plumb R."/>
            <person name="Rajan J."/>
            <person name="Raymond C."/>
            <person name="Rouse G."/>
            <person name="Saenphimmachak C."/>
            <person name="Sehra H.K."/>
            <person name="Sheridan E."/>
            <person name="Shownkeen R."/>
            <person name="Sims S."/>
            <person name="Skuce C.D."/>
            <person name="Smith M."/>
            <person name="Steward C."/>
            <person name="Subramanian S."/>
            <person name="Sycamore N."/>
            <person name="Tracey A."/>
            <person name="Tromans A."/>
            <person name="Van Helmond Z."/>
            <person name="Wall M."/>
            <person name="Wallis J.M."/>
            <person name="White S."/>
            <person name="Whitehead S.L."/>
            <person name="Wilkinson J.E."/>
            <person name="Willey D.L."/>
            <person name="Williams H."/>
            <person name="Wilming L."/>
            <person name="Wray P.W."/>
            <person name="Wu Z."/>
            <person name="Coulson A."/>
            <person name="Vaudin M."/>
            <person name="Sulston J.E."/>
            <person name="Durbin R.M."/>
            <person name="Hubbard T."/>
            <person name="Wooster R."/>
            <person name="Dunham I."/>
            <person name="Carter N.P."/>
            <person name="McVean G."/>
            <person name="Ross M.T."/>
            <person name="Harrow J."/>
            <person name="Olson M.V."/>
            <person name="Beck S."/>
            <person name="Rogers J."/>
            <person name="Bentley D.R."/>
        </authorList>
    </citation>
    <scope>NUCLEOTIDE SEQUENCE [LARGE SCALE GENOMIC DNA]</scope>
</reference>
<reference key="6">
    <citation type="submission" date="2005-07" db="EMBL/GenBank/DDBJ databases">
        <authorList>
            <person name="Mural R.J."/>
            <person name="Istrail S."/>
            <person name="Sutton G.G."/>
            <person name="Florea L."/>
            <person name="Halpern A.L."/>
            <person name="Mobarry C.M."/>
            <person name="Lippert R."/>
            <person name="Walenz B."/>
            <person name="Shatkay H."/>
            <person name="Dew I."/>
            <person name="Miller J.R."/>
            <person name="Flanigan M.J."/>
            <person name="Edwards N.J."/>
            <person name="Bolanos R."/>
            <person name="Fasulo D."/>
            <person name="Halldorsson B.V."/>
            <person name="Hannenhalli S."/>
            <person name="Turner R."/>
            <person name="Yooseph S."/>
            <person name="Lu F."/>
            <person name="Nusskern D.R."/>
            <person name="Shue B.C."/>
            <person name="Zheng X.H."/>
            <person name="Zhong F."/>
            <person name="Delcher A.L."/>
            <person name="Huson D.H."/>
            <person name="Kravitz S.A."/>
            <person name="Mouchard L."/>
            <person name="Reinert K."/>
            <person name="Remington K.A."/>
            <person name="Clark A.G."/>
            <person name="Waterman M.S."/>
            <person name="Eichler E.E."/>
            <person name="Adams M.D."/>
            <person name="Hunkapiller M.W."/>
            <person name="Myers E.W."/>
            <person name="Venter J.C."/>
        </authorList>
    </citation>
    <scope>NUCLEOTIDE SEQUENCE [LARGE SCALE GENOMIC DNA]</scope>
</reference>
<reference key="7">
    <citation type="journal article" date="2004" name="Genome Res.">
        <title>The status, quality, and expansion of the NIH full-length cDNA project: the Mammalian Gene Collection (MGC).</title>
        <authorList>
            <consortium name="The MGC Project Team"/>
        </authorList>
    </citation>
    <scope>NUCLEOTIDE SEQUENCE [LARGE SCALE MRNA] OF 329-860 (ISOFORM 1)</scope>
    <scope>VARIANT ALA-547</scope>
    <source>
        <tissue>B-cell</tissue>
    </source>
</reference>
<reference key="8">
    <citation type="journal article" date="2001" name="Genome Res.">
        <title>Towards a catalog of human genes and proteins: sequencing and analysis of 500 novel complete protein coding human cDNAs.</title>
        <authorList>
            <person name="Wiemann S."/>
            <person name="Weil B."/>
            <person name="Wellenreuther R."/>
            <person name="Gassenhuber J."/>
            <person name="Glassl S."/>
            <person name="Ansorge W."/>
            <person name="Boecher M."/>
            <person name="Bloecker H."/>
            <person name="Bauersachs S."/>
            <person name="Blum H."/>
            <person name="Lauber J."/>
            <person name="Duesterhoeft A."/>
            <person name="Beyer A."/>
            <person name="Koehrer K."/>
            <person name="Strack N."/>
            <person name="Mewes H.-W."/>
            <person name="Ottenwaelder B."/>
            <person name="Obermaier B."/>
            <person name="Tampe J."/>
            <person name="Heubner D."/>
            <person name="Wambutt R."/>
            <person name="Korn B."/>
            <person name="Klein M."/>
            <person name="Poustka A."/>
        </authorList>
    </citation>
    <scope>NUCLEOTIDE SEQUENCE [LARGE SCALE MRNA] OF 355-860 (ISOFORM 2)</scope>
    <source>
        <tissue>Testis</tissue>
    </source>
</reference>
<reference key="9">
    <citation type="journal article" date="2006" name="Mol. Cell">
        <title>A family of diverse Cul4-Ddb1-interacting proteins includes Cdt2, which is required for S phase destruction of the replication factor Cdt1.</title>
        <authorList>
            <person name="Jin J."/>
            <person name="Arias E.E."/>
            <person name="Chen J."/>
            <person name="Harper J.W."/>
            <person name="Walter J.C."/>
        </authorList>
    </citation>
    <scope>FUNCTION</scope>
    <scope>INTERACTION WITH DDB1; CUL4A AND CUL4B</scope>
    <scope>IDENTIFICATION BY MASS SPECTROMETRY</scope>
</reference>
<reference key="10">
    <citation type="journal article" date="2006" name="Nature">
        <title>Molecular architecture and assembly of the DDB1-CUL4A ubiquitin ligase machinery.</title>
        <authorList>
            <person name="Angers S."/>
            <person name="Li T."/>
            <person name="Yi X."/>
            <person name="MacCoss M.J."/>
            <person name="Moon R.T."/>
            <person name="Zheng N."/>
        </authorList>
    </citation>
    <scope>FUNCTION</scope>
</reference>
<reference key="11">
    <citation type="journal article" date="2008" name="Proc. Natl. Acad. Sci. U.S.A.">
        <title>A quantitative atlas of mitotic phosphorylation.</title>
        <authorList>
            <person name="Dephoure N."/>
            <person name="Zhou C."/>
            <person name="Villen J."/>
            <person name="Beausoleil S.A."/>
            <person name="Bakalarski C.E."/>
            <person name="Elledge S.J."/>
            <person name="Gygi S.P."/>
        </authorList>
    </citation>
    <scope>PHOSPHORYLATION [LARGE SCALE ANALYSIS] AT SER-336 AND SER-657</scope>
    <scope>IDENTIFICATION BY MASS SPECTROMETRY [LARGE SCALE ANALYSIS]</scope>
    <source>
        <tissue>Cervix carcinoma</tissue>
    </source>
</reference>
<reference key="12">
    <citation type="journal article" date="2009" name="Sci. Signal.">
        <title>Quantitative phosphoproteomic analysis of T cell receptor signaling reveals system-wide modulation of protein-protein interactions.</title>
        <authorList>
            <person name="Mayya V."/>
            <person name="Lundgren D.H."/>
            <person name="Hwang S.-I."/>
            <person name="Rezaul K."/>
            <person name="Wu L."/>
            <person name="Eng J.K."/>
            <person name="Rodionov V."/>
            <person name="Han D.K."/>
        </authorList>
    </citation>
    <scope>PHOSPHORYLATION [LARGE SCALE ANALYSIS] AT SER-336 AND SER-657</scope>
    <scope>IDENTIFICATION BY MASS SPECTROMETRY [LARGE SCALE ANALYSIS]</scope>
    <source>
        <tissue>Leukemic T-cell</tissue>
    </source>
</reference>
<reference key="13">
    <citation type="journal article" date="2010" name="Sci. Signal.">
        <title>Quantitative phosphoproteomics reveals widespread full phosphorylation site occupancy during mitosis.</title>
        <authorList>
            <person name="Olsen J.V."/>
            <person name="Vermeulen M."/>
            <person name="Santamaria A."/>
            <person name="Kumar C."/>
            <person name="Miller M.L."/>
            <person name="Jensen L.J."/>
            <person name="Gnad F."/>
            <person name="Cox J."/>
            <person name="Jensen T.S."/>
            <person name="Nigg E.A."/>
            <person name="Brunak S."/>
            <person name="Mann M."/>
        </authorList>
    </citation>
    <scope>PHOSPHORYLATION [LARGE SCALE ANALYSIS] AT SER-336; SER-649; THR-654 AND SER-657</scope>
    <scope>IDENTIFICATION BY MASS SPECTROMETRY [LARGE SCALE ANALYSIS]</scope>
    <source>
        <tissue>Cervix carcinoma</tissue>
    </source>
</reference>
<reference key="14">
    <citation type="journal article" date="2013" name="J. Proteome Res.">
        <title>Toward a comprehensive characterization of a human cancer cell phosphoproteome.</title>
        <authorList>
            <person name="Zhou H."/>
            <person name="Di Palma S."/>
            <person name="Preisinger C."/>
            <person name="Peng M."/>
            <person name="Polat A.N."/>
            <person name="Heck A.J."/>
            <person name="Mohammed S."/>
        </authorList>
    </citation>
    <scope>PHOSPHORYLATION [LARGE SCALE ANALYSIS] AT SER-336 AND SER-657</scope>
    <scope>IDENTIFICATION BY MASS SPECTROMETRY [LARGE SCALE ANALYSIS]</scope>
    <source>
        <tissue>Cervix carcinoma</tissue>
        <tissue>Erythroleukemia</tissue>
    </source>
</reference>
<reference key="15">
    <citation type="journal article" date="2014" name="J. Proteomics">
        <title>An enzyme assisted RP-RPLC approach for in-depth analysis of human liver phosphoproteome.</title>
        <authorList>
            <person name="Bian Y."/>
            <person name="Song C."/>
            <person name="Cheng K."/>
            <person name="Dong M."/>
            <person name="Wang F."/>
            <person name="Huang J."/>
            <person name="Sun D."/>
            <person name="Wang L."/>
            <person name="Ye M."/>
            <person name="Zou H."/>
        </authorList>
    </citation>
    <scope>PHOSPHORYLATION [LARGE SCALE ANALYSIS] AT SER-336; THR-654 AND SER-657</scope>
    <scope>IDENTIFICATION BY MASS SPECTROMETRY [LARGE SCALE ANALYSIS]</scope>
    <source>
        <tissue>Liver</tissue>
    </source>
</reference>
<accession>Q58WW2</accession>
<accession>A2A295</accession>
<accession>B4DNB8</accession>
<accession>Q7L8I0</accession>
<accession>Q8IXH3</accession>
<accession>Q8TB19</accession>
<evidence type="ECO:0000250" key="1">
    <source>
        <dbReference type="UniProtKB" id="Q9DC22"/>
    </source>
</evidence>
<evidence type="ECO:0000255" key="2">
    <source>
        <dbReference type="PROSITE-ProRule" id="PRU00116"/>
    </source>
</evidence>
<evidence type="ECO:0000256" key="3">
    <source>
        <dbReference type="SAM" id="MobiDB-lite"/>
    </source>
</evidence>
<evidence type="ECO:0000269" key="4">
    <source>
    </source>
</evidence>
<evidence type="ECO:0000269" key="5">
    <source>
    </source>
</evidence>
<evidence type="ECO:0000269" key="6">
    <source>
    </source>
</evidence>
<evidence type="ECO:0000269" key="7">
    <source>
    </source>
</evidence>
<evidence type="ECO:0000303" key="8">
    <source>
    </source>
</evidence>
<evidence type="ECO:0000303" key="9">
    <source>
    </source>
</evidence>
<evidence type="ECO:0000303" key="10">
    <source ref="3"/>
</evidence>
<evidence type="ECO:0007744" key="11">
    <source>
    </source>
</evidence>
<evidence type="ECO:0007744" key="12">
    <source>
    </source>
</evidence>
<evidence type="ECO:0007744" key="13">
    <source>
    </source>
</evidence>
<evidence type="ECO:0007744" key="14">
    <source>
    </source>
</evidence>
<evidence type="ECO:0007744" key="15">
    <source>
    </source>
</evidence>
<evidence type="ECO:0007829" key="16">
    <source>
        <dbReference type="PDB" id="3I7O"/>
    </source>
</evidence>
<name>DCAF6_HUMAN</name>
<protein>
    <recommendedName>
        <fullName>DDB1- and CUL4-associated factor 6</fullName>
    </recommendedName>
    <alternativeName>
        <fullName>Androgen receptor complex-associated protein</fullName>
        <shortName>ARCAP</shortName>
    </alternativeName>
    <alternativeName>
        <fullName>IQ motif and WD repeat-containing protein 1</fullName>
    </alternativeName>
    <alternativeName>
        <fullName>Nuclear receptor interaction protein</fullName>
        <shortName>NRIP</shortName>
    </alternativeName>
</protein>
<proteinExistence type="evidence at protein level"/>
<organism>
    <name type="scientific">Homo sapiens</name>
    <name type="common">Human</name>
    <dbReference type="NCBI Taxonomy" id="9606"/>
    <lineage>
        <taxon>Eukaryota</taxon>
        <taxon>Metazoa</taxon>
        <taxon>Chordata</taxon>
        <taxon>Craniata</taxon>
        <taxon>Vertebrata</taxon>
        <taxon>Euteleostomi</taxon>
        <taxon>Mammalia</taxon>
        <taxon>Eutheria</taxon>
        <taxon>Euarchontoglires</taxon>
        <taxon>Primates</taxon>
        <taxon>Haplorrhini</taxon>
        <taxon>Catarrhini</taxon>
        <taxon>Hominidae</taxon>
        <taxon>Homo</taxon>
    </lineage>
</organism>
<sequence>MSRGGSYPHLLWDVRKRSLGLEDPSRLRSRYLGRREFIQRLKLEATLNVHDGCVNTICWNDTGEYILSGSDDTKLVISNPYSRKVLTTIRSGHRANIFSAKFLPCTNDKQIVSCSGDGVIFYTNVEQDAETNRQCQFTCHYGTTYEIMTVPNDPYTFLSCGEDGTVRWFDTRIKTSCTKEDCKDDILINCRRAATSVAICPPIPYYLAVGCSDSSVRIYDRRMLGTRATGNYAGRGTTGMVARFIPSHLNNKSCRVTSLCYSEDGQEILVSYSSDYIYLFDPKDDTARELKTPSAEERREELRQPPVKRLRLRGDWSDTGPRARPESERERDGEQSPNVSLMQRMSDMLSRWFEEASEVAQSNRGRGRSRPRGGTSQSDISTLPTVPSSPDLEVSETAMEVDTPAEQFLQPSTSSTMSAQAHSTSSPTESPHSTPLLSSPDSEQRQSVEASGHHTHHQSDNNNEKLSPKPGTGEPVLSLHYSTEGTTTSTIKLNFTDEWSSIASSSRGIGSHCKSEGQEESFVPQSSVQPPEGDSETKAPEESSEDVTKYQEGVSAENPVENHINITQSDKFTAKPLDSNSGERNDLNLDRSCGVPEESASSEKAKEPETSDQTSTESATNENNTNPEPQFQTEATGPSAHEETSTRDSALQDTDDSDDDPVLIPGARYRAGPGDRRSAVARIQEFFRRRKERKEMEELDTLNIRRPLVKMVYKGHRNSRTMIKEANFWGANFVMSGSDCGHIFIWDRHTAEHLMLLEADNHVVNCLQPHPFDPILASSGIDYDIKIWSPLEESRIFNRKLADEVITRNELMLEETRNTITVPASFMLRMLASLNHIRADRLEGDRSEGSGQENENEDEE</sequence>
<keyword id="KW-0002">3D-structure</keyword>
<keyword id="KW-0025">Alternative splicing</keyword>
<keyword id="KW-0539">Nucleus</keyword>
<keyword id="KW-0597">Phosphoprotein</keyword>
<keyword id="KW-1267">Proteomics identification</keyword>
<keyword id="KW-1185">Reference proteome</keyword>
<keyword id="KW-0677">Repeat</keyword>
<keyword id="KW-0833">Ubl conjugation pathway</keyword>
<keyword id="KW-0853">WD repeat</keyword>
<dbReference type="EMBL" id="AY766164">
    <property type="protein sequence ID" value="AAX09330.1"/>
    <property type="molecule type" value="mRNA"/>
</dbReference>
<dbReference type="EMBL" id="DQ768089">
    <property type="protein sequence ID" value="ABG76793.1"/>
    <property type="molecule type" value="mRNA"/>
</dbReference>
<dbReference type="EMBL" id="AF116725">
    <property type="protein sequence ID" value="AAO15301.1"/>
    <property type="molecule type" value="mRNA"/>
</dbReference>
<dbReference type="EMBL" id="AK297847">
    <property type="protein sequence ID" value="BAG60180.1"/>
    <property type="molecule type" value="mRNA"/>
</dbReference>
<dbReference type="EMBL" id="Z97876">
    <property type="status" value="NOT_ANNOTATED_CDS"/>
    <property type="molecule type" value="Genomic_DNA"/>
</dbReference>
<dbReference type="EMBL" id="AL033531">
    <property type="status" value="NOT_ANNOTATED_CDS"/>
    <property type="molecule type" value="Genomic_DNA"/>
</dbReference>
<dbReference type="EMBL" id="AL031287">
    <property type="status" value="NOT_ANNOTATED_CDS"/>
    <property type="molecule type" value="Genomic_DNA"/>
</dbReference>
<dbReference type="EMBL" id="AL033532">
    <property type="status" value="NOT_ANNOTATED_CDS"/>
    <property type="molecule type" value="Genomic_DNA"/>
</dbReference>
<dbReference type="EMBL" id="CH471067">
    <property type="protein sequence ID" value="EAW90809.1"/>
    <property type="molecule type" value="Genomic_DNA"/>
</dbReference>
<dbReference type="EMBL" id="BC025262">
    <property type="protein sequence ID" value="AAH25262.2"/>
    <property type="molecule type" value="mRNA"/>
</dbReference>
<dbReference type="EMBL" id="AL136738">
    <property type="protein sequence ID" value="CAB66672.2"/>
    <property type="molecule type" value="mRNA"/>
</dbReference>
<dbReference type="CCDS" id="CCDS1267.2">
    <molecule id="Q58WW2-2"/>
</dbReference>
<dbReference type="CCDS" id="CCDS30933.1">
    <molecule id="Q58WW2-1"/>
</dbReference>
<dbReference type="CCDS" id="CCDS55657.1">
    <molecule id="Q58WW2-3"/>
</dbReference>
<dbReference type="CCDS" id="CCDS55658.1">
    <molecule id="Q58WW2-4"/>
</dbReference>
<dbReference type="RefSeq" id="NP_001017977.1">
    <molecule id="Q58WW2-1"/>
    <property type="nucleotide sequence ID" value="NM_001017977.3"/>
</dbReference>
<dbReference type="RefSeq" id="NP_001185885.1">
    <molecule id="Q58WW2-3"/>
    <property type="nucleotide sequence ID" value="NM_001198956.2"/>
</dbReference>
<dbReference type="RefSeq" id="NP_001185886.1">
    <molecule id="Q58WW2-4"/>
    <property type="nucleotide sequence ID" value="NM_001198957.2"/>
</dbReference>
<dbReference type="RefSeq" id="NP_060912.2">
    <molecule id="Q58WW2-2"/>
    <property type="nucleotide sequence ID" value="NM_018442.4"/>
</dbReference>
<dbReference type="PDB" id="3I7O">
    <property type="method" value="X-ray"/>
    <property type="resolution" value="2.80 A"/>
    <property type="chains" value="B=9-21"/>
</dbReference>
<dbReference type="PDBsum" id="3I7O"/>
<dbReference type="SMR" id="Q58WW2"/>
<dbReference type="BioGRID" id="120933">
    <property type="interactions" value="238"/>
</dbReference>
<dbReference type="ComplexPortal" id="CPX-2784">
    <property type="entry name" value="CRL4-DCAF6 E3 ubiquitin ligase complex, CUL4A variant"/>
</dbReference>
<dbReference type="ComplexPortal" id="CPX-2804">
    <property type="entry name" value="CRL4-DCAF6 E3 ubiquitin ligase complex, CUL4B variant"/>
</dbReference>
<dbReference type="DIP" id="DIP-44678N"/>
<dbReference type="FunCoup" id="Q58WW2">
    <property type="interactions" value="1148"/>
</dbReference>
<dbReference type="IntAct" id="Q58WW2">
    <property type="interactions" value="78"/>
</dbReference>
<dbReference type="MINT" id="Q58WW2"/>
<dbReference type="STRING" id="9606.ENSP00000356814"/>
<dbReference type="GlyGen" id="Q58WW2">
    <property type="glycosylation" value="1 site, 1 O-linked glycan (1 site)"/>
</dbReference>
<dbReference type="iPTMnet" id="Q58WW2"/>
<dbReference type="PhosphoSitePlus" id="Q58WW2"/>
<dbReference type="BioMuta" id="DCAF6"/>
<dbReference type="DMDM" id="74755134"/>
<dbReference type="jPOST" id="Q58WW2"/>
<dbReference type="MassIVE" id="Q58WW2"/>
<dbReference type="PaxDb" id="9606-ENSP00000356814"/>
<dbReference type="PeptideAtlas" id="Q58WW2"/>
<dbReference type="ProteomicsDB" id="62628">
    <molecule id="Q58WW2-1"/>
</dbReference>
<dbReference type="ProteomicsDB" id="62629">
    <molecule id="Q58WW2-2"/>
</dbReference>
<dbReference type="ProteomicsDB" id="62630">
    <molecule id="Q58WW2-3"/>
</dbReference>
<dbReference type="ProteomicsDB" id="62631">
    <molecule id="Q58WW2-4"/>
</dbReference>
<dbReference type="Pumba" id="Q58WW2"/>
<dbReference type="Antibodypedia" id="34346">
    <property type="antibodies" value="148 antibodies from 26 providers"/>
</dbReference>
<dbReference type="DNASU" id="55827"/>
<dbReference type="Ensembl" id="ENST00000312263.10">
    <molecule id="Q58WW2-1"/>
    <property type="protein sequence ID" value="ENSP00000311949.6"/>
    <property type="gene ID" value="ENSG00000143164.16"/>
</dbReference>
<dbReference type="Ensembl" id="ENST00000367840.4">
    <molecule id="Q58WW2-3"/>
    <property type="protein sequence ID" value="ENSP00000356814.3"/>
    <property type="gene ID" value="ENSG00000143164.16"/>
</dbReference>
<dbReference type="Ensembl" id="ENST00000367843.7">
    <molecule id="Q58WW2-2"/>
    <property type="protein sequence ID" value="ENSP00000356817.3"/>
    <property type="gene ID" value="ENSG00000143164.16"/>
</dbReference>
<dbReference type="Ensembl" id="ENST00000432587.6">
    <molecule id="Q58WW2-4"/>
    <property type="protein sequence ID" value="ENSP00000396238.2"/>
    <property type="gene ID" value="ENSG00000143164.16"/>
</dbReference>
<dbReference type="GeneID" id="55827"/>
<dbReference type="KEGG" id="hsa:55827"/>
<dbReference type="MANE-Select" id="ENST00000367840.4">
    <molecule id="Q58WW2-3"/>
    <property type="protein sequence ID" value="ENSP00000356814.3"/>
    <property type="RefSeq nucleotide sequence ID" value="NM_001198956.2"/>
    <property type="RefSeq protein sequence ID" value="NP_001185885.1"/>
</dbReference>
<dbReference type="UCSC" id="uc001gev.5">
    <molecule id="Q58WW2-1"/>
    <property type="organism name" value="human"/>
</dbReference>
<dbReference type="AGR" id="HGNC:30002"/>
<dbReference type="CTD" id="55827"/>
<dbReference type="DisGeNET" id="55827"/>
<dbReference type="GeneCards" id="DCAF6"/>
<dbReference type="HGNC" id="HGNC:30002">
    <property type="gene designation" value="DCAF6"/>
</dbReference>
<dbReference type="HPA" id="ENSG00000143164">
    <property type="expression patterns" value="Group enriched (skeletal muscle, tongue)"/>
</dbReference>
<dbReference type="MIM" id="610494">
    <property type="type" value="gene"/>
</dbReference>
<dbReference type="neXtProt" id="NX_Q58WW2"/>
<dbReference type="OpenTargets" id="ENSG00000143164"/>
<dbReference type="PharmGKB" id="PA165751150"/>
<dbReference type="VEuPathDB" id="HostDB:ENSG00000143164"/>
<dbReference type="eggNOG" id="KOG1310">
    <property type="taxonomic scope" value="Eukaryota"/>
</dbReference>
<dbReference type="eggNOG" id="KOG1334">
    <property type="taxonomic scope" value="Eukaryota"/>
</dbReference>
<dbReference type="GeneTree" id="ENSGT00950000182900"/>
<dbReference type="InParanoid" id="Q58WW2"/>
<dbReference type="OMA" id="FRVRYGN"/>
<dbReference type="OrthoDB" id="4869960at2759"/>
<dbReference type="PAN-GO" id="Q58WW2">
    <property type="GO annotations" value="4 GO annotations based on evolutionary models"/>
</dbReference>
<dbReference type="PhylomeDB" id="Q58WW2"/>
<dbReference type="TreeFam" id="TF326071"/>
<dbReference type="PathwayCommons" id="Q58WW2"/>
<dbReference type="Reactome" id="R-HSA-8951664">
    <property type="pathway name" value="Neddylation"/>
</dbReference>
<dbReference type="SignaLink" id="Q58WW2"/>
<dbReference type="UniPathway" id="UPA00143"/>
<dbReference type="BioGRID-ORCS" id="55827">
    <property type="hits" value="40 hits in 1195 CRISPR screens"/>
</dbReference>
<dbReference type="ChiTaRS" id="DCAF6">
    <property type="organism name" value="human"/>
</dbReference>
<dbReference type="EvolutionaryTrace" id="Q58WW2"/>
<dbReference type="GenomeRNAi" id="55827"/>
<dbReference type="Pharos" id="Q58WW2">
    <property type="development level" value="Tbio"/>
</dbReference>
<dbReference type="PRO" id="PR:Q58WW2"/>
<dbReference type="Proteomes" id="UP000005640">
    <property type="component" value="Chromosome 1"/>
</dbReference>
<dbReference type="RNAct" id="Q58WW2">
    <property type="molecule type" value="protein"/>
</dbReference>
<dbReference type="Bgee" id="ENSG00000143164">
    <property type="expression patterns" value="Expressed in skeletal muscle tissue of rectus abdominis and 206 other cell types or tissues"/>
</dbReference>
<dbReference type="ExpressionAtlas" id="Q58WW2">
    <property type="expression patterns" value="baseline and differential"/>
</dbReference>
<dbReference type="GO" id="GO:0080008">
    <property type="term" value="C:Cul4-RING E3 ubiquitin ligase complex"/>
    <property type="evidence" value="ECO:0000314"/>
    <property type="project" value="UniProtKB"/>
</dbReference>
<dbReference type="GO" id="GO:0005737">
    <property type="term" value="C:cytoplasm"/>
    <property type="evidence" value="ECO:0000318"/>
    <property type="project" value="GO_Central"/>
</dbReference>
<dbReference type="GO" id="GO:0005829">
    <property type="term" value="C:cytosol"/>
    <property type="evidence" value="ECO:0000314"/>
    <property type="project" value="HPA"/>
</dbReference>
<dbReference type="GO" id="GO:0005654">
    <property type="term" value="C:nucleoplasm"/>
    <property type="evidence" value="ECO:0000314"/>
    <property type="project" value="HPA"/>
</dbReference>
<dbReference type="GO" id="GO:0005634">
    <property type="term" value="C:nucleus"/>
    <property type="evidence" value="ECO:0000314"/>
    <property type="project" value="MGI"/>
</dbReference>
<dbReference type="GO" id="GO:0003713">
    <property type="term" value="F:transcription coactivator activity"/>
    <property type="evidence" value="ECO:0000314"/>
    <property type="project" value="MGI"/>
</dbReference>
<dbReference type="GO" id="GO:0045944">
    <property type="term" value="P:positive regulation of transcription by RNA polymerase II"/>
    <property type="evidence" value="ECO:0000316"/>
    <property type="project" value="MGI"/>
</dbReference>
<dbReference type="GO" id="GO:0016567">
    <property type="term" value="P:protein ubiquitination"/>
    <property type="evidence" value="ECO:0007669"/>
    <property type="project" value="UniProtKB-UniPathway"/>
</dbReference>
<dbReference type="FunFam" id="2.130.10.10:FF:000078">
    <property type="entry name" value="DDB1- and CUL4-associated factor 6 isoform X1"/>
    <property type="match status" value="1"/>
</dbReference>
<dbReference type="FunFam" id="2.130.10.10:FF:000045">
    <property type="entry name" value="DDB1- and CUL4-associated factor 6 isoform X2"/>
    <property type="match status" value="1"/>
</dbReference>
<dbReference type="Gene3D" id="2.130.10.10">
    <property type="entry name" value="YVTN repeat-like/Quinoprotein amine dehydrogenase"/>
    <property type="match status" value="2"/>
</dbReference>
<dbReference type="InterPro" id="IPR045151">
    <property type="entry name" value="DCAF8"/>
</dbReference>
<dbReference type="InterPro" id="IPR015943">
    <property type="entry name" value="WD40/YVTN_repeat-like_dom_sf"/>
</dbReference>
<dbReference type="InterPro" id="IPR036322">
    <property type="entry name" value="WD40_repeat_dom_sf"/>
</dbReference>
<dbReference type="InterPro" id="IPR001680">
    <property type="entry name" value="WD40_rpt"/>
</dbReference>
<dbReference type="PANTHER" id="PTHR15574:SF39">
    <property type="entry name" value="DDB1- AND CUL4-ASSOCIATED FACTOR 6"/>
    <property type="match status" value="1"/>
</dbReference>
<dbReference type="PANTHER" id="PTHR15574">
    <property type="entry name" value="WD REPEAT DOMAIN-CONTAINING FAMILY"/>
    <property type="match status" value="1"/>
</dbReference>
<dbReference type="Pfam" id="PF00400">
    <property type="entry name" value="WD40"/>
    <property type="match status" value="3"/>
</dbReference>
<dbReference type="SMART" id="SM00320">
    <property type="entry name" value="WD40"/>
    <property type="match status" value="7"/>
</dbReference>
<dbReference type="SUPFAM" id="SSF50978">
    <property type="entry name" value="WD40 repeat-like"/>
    <property type="match status" value="1"/>
</dbReference>
<dbReference type="PROSITE" id="PS50096">
    <property type="entry name" value="IQ"/>
    <property type="match status" value="1"/>
</dbReference>
<dbReference type="PROSITE" id="PS50294">
    <property type="entry name" value="WD_REPEATS_REGION"/>
    <property type="match status" value="2"/>
</dbReference>
<comment type="function">
    <text evidence="5 6 7">Ligand-dependent coactivator of nuclear receptors. Enhance transcriptional activity of the nuclear receptors NR3C1 and AR. May function as a substrate receptor for CUL4-DDB1 E3 ubiquitin-protein ligase complex.</text>
</comment>
<comment type="pathway">
    <text>Protein modification; protein ubiquitination.</text>
</comment>
<comment type="subunit">
    <text evidence="5 6">Interacts with the nuclear receptors NR3C1 and AR in the presence of ligand. Interacts with DDB1, CUL4A and CUL4B.</text>
</comment>
<comment type="interaction">
    <interactant intactId="EBI-2559044">
        <id>Q58WW2</id>
    </interactant>
    <interactant intactId="EBI-12594867">
        <id>O95972</id>
        <label>BMP15</label>
    </interactant>
    <organismsDiffer>false</organismsDiffer>
    <experiments>2</experiments>
</comment>
<comment type="interaction">
    <interactant intactId="EBI-2559044">
        <id>Q58WW2</id>
    </interactant>
    <interactant intactId="EBI-350322">
        <id>Q16531</id>
        <label>DDB1</label>
    </interactant>
    <organismsDiffer>false</organismsDiffer>
    <experiments>2</experiments>
</comment>
<comment type="interaction">
    <interactant intactId="EBI-2559044">
        <id>Q58WW2</id>
    </interactant>
    <interactant intactId="EBI-372530">
        <id>Q9UHL9</id>
        <label>GTF2IRD1</label>
    </interactant>
    <organismsDiffer>false</organismsDiffer>
    <experiments>2</experiments>
</comment>
<comment type="interaction">
    <interactant intactId="EBI-2559044">
        <id>Q58WW2</id>
    </interactant>
    <interactant intactId="EBI-724076">
        <id>Q99750</id>
        <label>MDFI</label>
    </interactant>
    <organismsDiffer>false</organismsDiffer>
    <experiments>3</experiments>
</comment>
<comment type="subcellular location">
    <subcellularLocation>
        <location evidence="5">Nucleus</location>
    </subcellularLocation>
</comment>
<comment type="alternative products">
    <event type="alternative splicing"/>
    <isoform>
        <id>Q58WW2-1</id>
        <name>1</name>
        <sequence type="displayed"/>
    </isoform>
    <isoform>
        <id>Q58WW2-2</id>
        <name>2</name>
        <sequence type="described" ref="VSP_028019"/>
    </isoform>
    <isoform>
        <id>Q58WW2-3</id>
        <name>3</name>
        <sequence type="described" ref="VSP_028020 VSP_028021"/>
    </isoform>
    <isoform>
        <id>Q58WW2-4</id>
        <name>4</name>
        <sequence type="described" ref="VSP_043312 VSP_028020 VSP_028021"/>
    </isoform>
</comment>
<comment type="tissue specificity">
    <text evidence="5">Highly expressed in skeletal muscle and testis. Expressed to a lesser degree in heart, prostate, and adrenal gland.</text>
</comment>
<feature type="chain" id="PRO_0000304401" description="DDB1- and CUL4-associated factor 6">
    <location>
        <begin position="1"/>
        <end position="860"/>
    </location>
</feature>
<feature type="repeat" description="WD 1">
    <location>
        <begin position="49"/>
        <end position="88"/>
    </location>
</feature>
<feature type="repeat" description="WD 2">
    <location>
        <begin position="92"/>
        <end position="133"/>
    </location>
</feature>
<feature type="repeat" description="WD 3">
    <location>
        <begin position="139"/>
        <end position="179"/>
    </location>
</feature>
<feature type="repeat" description="WD 4">
    <location>
        <begin position="189"/>
        <end position="229"/>
    </location>
</feature>
<feature type="repeat" description="WD 5">
    <location>
        <begin position="251"/>
        <end position="290"/>
    </location>
</feature>
<feature type="domain" description="IQ" evidence="2">
    <location>
        <begin position="676"/>
        <end position="705"/>
    </location>
</feature>
<feature type="repeat" description="WD 6">
    <location>
        <begin position="718"/>
        <end position="756"/>
    </location>
</feature>
<feature type="repeat" description="WD 7">
    <location>
        <begin position="759"/>
        <end position="798"/>
    </location>
</feature>
<feature type="region of interest" description="Disordered" evidence="3">
    <location>
        <begin position="288"/>
        <end position="340"/>
    </location>
</feature>
<feature type="region of interest" description="Disordered" evidence="3">
    <location>
        <begin position="355"/>
        <end position="392"/>
    </location>
</feature>
<feature type="region of interest" description="Disordered" evidence="3">
    <location>
        <begin position="407"/>
        <end position="490"/>
    </location>
</feature>
<feature type="region of interest" description="Disordered" evidence="3">
    <location>
        <begin position="502"/>
        <end position="675"/>
    </location>
</feature>
<feature type="compositionally biased region" description="Basic and acidic residues" evidence="3">
    <location>
        <begin position="288"/>
        <end position="303"/>
    </location>
</feature>
<feature type="compositionally biased region" description="Basic and acidic residues" evidence="3">
    <location>
        <begin position="312"/>
        <end position="334"/>
    </location>
</feature>
<feature type="compositionally biased region" description="Polar residues" evidence="3">
    <location>
        <begin position="379"/>
        <end position="388"/>
    </location>
</feature>
<feature type="compositionally biased region" description="Polar residues" evidence="3">
    <location>
        <begin position="409"/>
        <end position="421"/>
    </location>
</feature>
<feature type="compositionally biased region" description="Low complexity" evidence="3">
    <location>
        <begin position="422"/>
        <end position="441"/>
    </location>
</feature>
<feature type="compositionally biased region" description="Basic and acidic residues" evidence="3">
    <location>
        <begin position="457"/>
        <end position="467"/>
    </location>
</feature>
<feature type="compositionally biased region" description="Polar residues" evidence="3">
    <location>
        <begin position="480"/>
        <end position="490"/>
    </location>
</feature>
<feature type="compositionally biased region" description="Low complexity" evidence="3">
    <location>
        <begin position="502"/>
        <end position="511"/>
    </location>
</feature>
<feature type="compositionally biased region" description="Basic and acidic residues" evidence="3">
    <location>
        <begin position="535"/>
        <end position="549"/>
    </location>
</feature>
<feature type="compositionally biased region" description="Low complexity" evidence="3">
    <location>
        <begin position="614"/>
        <end position="626"/>
    </location>
</feature>
<feature type="compositionally biased region" description="Polar residues" evidence="3">
    <location>
        <begin position="627"/>
        <end position="636"/>
    </location>
</feature>
<feature type="modified residue" description="Phosphoserine" evidence="11 12 13 14 15">
    <location>
        <position position="336"/>
    </location>
</feature>
<feature type="modified residue" description="Phosphoserine" evidence="13">
    <location>
        <position position="649"/>
    </location>
</feature>
<feature type="modified residue" description="Phosphothreonine" evidence="13 15">
    <location>
        <position position="654"/>
    </location>
</feature>
<feature type="modified residue" description="Phosphoserine" evidence="11 12 13 14 15">
    <location>
        <position position="657"/>
    </location>
</feature>
<feature type="modified residue" description="Phosphoserine" evidence="1">
    <location>
        <position position="847"/>
    </location>
</feature>
<feature type="modified residue" description="Phosphoserine" evidence="1">
    <location>
        <position position="850"/>
    </location>
</feature>
<feature type="splice variant" id="VSP_043312" description="In isoform 4." evidence="9">
    <location>
        <begin position="54"/>
        <end position="84"/>
    </location>
</feature>
<feature type="splice variant" id="VSP_028019" description="In isoform 2." evidence="8">
    <original>S</original>
    <variation>SDSPSSVVNKQLGSMSLDEQQ</variation>
    <location>
        <position position="459"/>
    </location>
</feature>
<feature type="splice variant" id="VSP_028020" description="In isoform 3 and isoform 4." evidence="9 10">
    <original>S</original>
    <variation>SEFLRGPEIALLRKRLQQLRLKKAEQQRQQELAAHTQQQPSTSDQSSHEGSSQDPHASDSPSSVVNKQLGSMSLDEQQ</variation>
    <location>
        <position position="459"/>
    </location>
</feature>
<feature type="splice variant" id="VSP_028021" description="In isoform 3 and isoform 4." evidence="9 10">
    <original>D</original>
    <variation>DRFNIRGTTIGDRIM</variation>
    <location>
        <position position="675"/>
    </location>
</feature>
<feature type="sequence variant" id="VAR_035020" description="In dbSNP:rs11558511." evidence="4">
    <original>V</original>
    <variation>A</variation>
    <location>
        <position position="547"/>
    </location>
</feature>
<feature type="helix" evidence="16">
    <location>
        <begin position="10"/>
        <end position="18"/>
    </location>
</feature>